<dbReference type="EMBL" id="AB072920">
    <property type="protein sequence ID" value="BAB88905.1"/>
    <property type="molecule type" value="mRNA"/>
</dbReference>
<dbReference type="EMBL" id="BC078730">
    <property type="protein sequence ID" value="AAH78730.1"/>
    <property type="molecule type" value="mRNA"/>
</dbReference>
<dbReference type="RefSeq" id="NP_620208.1">
    <property type="nucleotide sequence ID" value="NM_138853.2"/>
</dbReference>
<dbReference type="SMR" id="Q8R512"/>
<dbReference type="FunCoup" id="Q8R512">
    <property type="interactions" value="427"/>
</dbReference>
<dbReference type="IntAct" id="Q8R512">
    <property type="interactions" value="4"/>
</dbReference>
<dbReference type="STRING" id="10116.ENSRNOP00000021342"/>
<dbReference type="PhosphoSitePlus" id="Q8R512"/>
<dbReference type="PaxDb" id="10116-ENSRNOP00000021342"/>
<dbReference type="GeneID" id="192207"/>
<dbReference type="KEGG" id="rno:192207"/>
<dbReference type="UCSC" id="RGD:620769">
    <property type="organism name" value="rat"/>
</dbReference>
<dbReference type="AGR" id="RGD:620769"/>
<dbReference type="CTD" id="91544"/>
<dbReference type="RGD" id="620769">
    <property type="gene designation" value="Ubxn11"/>
</dbReference>
<dbReference type="VEuPathDB" id="HostDB:ENSRNOG00000015476"/>
<dbReference type="eggNOG" id="KOG2086">
    <property type="taxonomic scope" value="Eukaryota"/>
</dbReference>
<dbReference type="HOGENOM" id="CLU_044433_0_1_1"/>
<dbReference type="InParanoid" id="Q8R512"/>
<dbReference type="PhylomeDB" id="Q8R512"/>
<dbReference type="TreeFam" id="TF329799"/>
<dbReference type="Reactome" id="R-RNO-9696264">
    <property type="pathway name" value="RND3 GTPase cycle"/>
</dbReference>
<dbReference type="Reactome" id="R-RNO-9696270">
    <property type="pathway name" value="RND2 GTPase cycle"/>
</dbReference>
<dbReference type="Reactome" id="R-RNO-9696273">
    <property type="pathway name" value="RND1 GTPase cycle"/>
</dbReference>
<dbReference type="PRO" id="PR:Q8R512"/>
<dbReference type="Proteomes" id="UP000002494">
    <property type="component" value="Chromosome 5"/>
</dbReference>
<dbReference type="Bgee" id="ENSRNOG00000015476">
    <property type="expression patterns" value="Expressed in testis and 18 other cell types or tissues"/>
</dbReference>
<dbReference type="GO" id="GO:0005737">
    <property type="term" value="C:cytoplasm"/>
    <property type="evidence" value="ECO:0007669"/>
    <property type="project" value="UniProtKB-KW"/>
</dbReference>
<dbReference type="GO" id="GO:0005856">
    <property type="term" value="C:cytoskeleton"/>
    <property type="evidence" value="ECO:0007669"/>
    <property type="project" value="UniProtKB-SubCell"/>
</dbReference>
<dbReference type="GO" id="GO:0043130">
    <property type="term" value="F:ubiquitin binding"/>
    <property type="evidence" value="ECO:0000318"/>
    <property type="project" value="GO_Central"/>
</dbReference>
<dbReference type="GO" id="GO:0043161">
    <property type="term" value="P:proteasome-mediated ubiquitin-dependent protein catabolic process"/>
    <property type="evidence" value="ECO:0000318"/>
    <property type="project" value="GO_Central"/>
</dbReference>
<dbReference type="CDD" id="cd17077">
    <property type="entry name" value="UBX_UBXN11"/>
    <property type="match status" value="1"/>
</dbReference>
<dbReference type="FunFam" id="3.30.420.210:FF:000003">
    <property type="entry name" value="UBX domain protein 11"/>
    <property type="match status" value="1"/>
</dbReference>
<dbReference type="Gene3D" id="3.10.20.90">
    <property type="entry name" value="Phosphatidylinositol 3-kinase Catalytic Subunit, Chain A, domain 1"/>
    <property type="match status" value="1"/>
</dbReference>
<dbReference type="Gene3D" id="3.30.420.210">
    <property type="entry name" value="SEP domain"/>
    <property type="match status" value="1"/>
</dbReference>
<dbReference type="InterPro" id="IPR036241">
    <property type="entry name" value="NSFL1C_SEP_dom_sf"/>
</dbReference>
<dbReference type="InterPro" id="IPR012989">
    <property type="entry name" value="SEP_domain"/>
</dbReference>
<dbReference type="InterPro" id="IPR029071">
    <property type="entry name" value="Ubiquitin-like_domsf"/>
</dbReference>
<dbReference type="InterPro" id="IPR001012">
    <property type="entry name" value="UBX_dom"/>
</dbReference>
<dbReference type="PANTHER" id="PTHR23333">
    <property type="entry name" value="UBX DOMAIN CONTAINING PROTEIN"/>
    <property type="match status" value="1"/>
</dbReference>
<dbReference type="PANTHER" id="PTHR23333:SF4">
    <property type="entry name" value="UBX DOMAIN-CONTAINING PROTEIN 11"/>
    <property type="match status" value="1"/>
</dbReference>
<dbReference type="Pfam" id="PF08059">
    <property type="entry name" value="SEP"/>
    <property type="match status" value="1"/>
</dbReference>
<dbReference type="Pfam" id="PF00789">
    <property type="entry name" value="UBX"/>
    <property type="match status" value="1"/>
</dbReference>
<dbReference type="SUPFAM" id="SSF102848">
    <property type="entry name" value="NSFL1 (p97 ATPase) cofactor p47, SEP domain"/>
    <property type="match status" value="1"/>
</dbReference>
<dbReference type="SUPFAM" id="SSF54236">
    <property type="entry name" value="Ubiquitin-like"/>
    <property type="match status" value="1"/>
</dbReference>
<dbReference type="PROSITE" id="PS51399">
    <property type="entry name" value="SEP"/>
    <property type="match status" value="1"/>
</dbReference>
<dbReference type="PROSITE" id="PS50033">
    <property type="entry name" value="UBX"/>
    <property type="match status" value="1"/>
</dbReference>
<accession>Q8R512</accession>
<protein>
    <recommendedName>
        <fullName>UBX domain-containing protein 11</fullName>
    </recommendedName>
    <alternativeName>
        <fullName>Socius</fullName>
    </alternativeName>
    <alternativeName>
        <fullName>UBX domain-containing protein 5</fullName>
    </alternativeName>
</protein>
<evidence type="ECO:0000250" key="1">
    <source>
        <dbReference type="UniProtKB" id="Q9D572"/>
    </source>
</evidence>
<evidence type="ECO:0000255" key="2"/>
<evidence type="ECO:0000255" key="3">
    <source>
        <dbReference type="PROSITE-ProRule" id="PRU00215"/>
    </source>
</evidence>
<evidence type="ECO:0000255" key="4">
    <source>
        <dbReference type="PROSITE-ProRule" id="PRU00732"/>
    </source>
</evidence>
<evidence type="ECO:0000256" key="5">
    <source>
        <dbReference type="SAM" id="MobiDB-lite"/>
    </source>
</evidence>
<evidence type="ECO:0000269" key="6">
    <source>
    </source>
</evidence>
<evidence type="ECO:0000269" key="7">
    <source>
    </source>
</evidence>
<reference key="1">
    <citation type="journal article" date="2002" name="Mol. Cell. Biol.">
        <title>Socius is a novel Rnd GTPase-interacting protein involved in disassembly of actin stress fibers.</title>
        <authorList>
            <person name="Katoh H."/>
            <person name="Harada A."/>
            <person name="Mori K."/>
            <person name="Negishi M."/>
        </authorList>
    </citation>
    <scope>NUCLEOTIDE SEQUENCE [MRNA]</scope>
    <scope>INTERACTION WITH RND1; RND2 AND RND3</scope>
    <scope>TISSUE SPECIFICITY</scope>
    <scope>SUBCELLULAR LOCATION</scope>
    <scope>FUNCTION</scope>
    <source>
        <strain>Wistar</strain>
        <tissue>Testis</tissue>
    </source>
</reference>
<reference key="2">
    <citation type="journal article" date="2004" name="Genome Res.">
        <title>The status, quality, and expansion of the NIH full-length cDNA project: the Mammalian Gene Collection (MGC).</title>
        <authorList>
            <consortium name="The MGC Project Team"/>
        </authorList>
    </citation>
    <scope>NUCLEOTIDE SEQUENCE [LARGE SCALE MRNA]</scope>
    <source>
        <tissue>Testis</tissue>
    </source>
</reference>
<reference key="3">
    <citation type="journal article" date="2005" name="Biochem. Biophys. Res. Commun.">
        <title>Socius, a novel binding partner of Galpha12/13, promotes the Galpha12-induced RhoA activation.</title>
        <authorList>
            <person name="Tateiwa K."/>
            <person name="Katoh H."/>
            <person name="Negishi M."/>
        </authorList>
    </citation>
    <scope>INTERACTION WITH GNA12 AND GNA13</scope>
    <scope>FUNCTION</scope>
</reference>
<keyword id="KW-0175">Coiled coil</keyword>
<keyword id="KW-0963">Cytoplasm</keyword>
<keyword id="KW-0206">Cytoskeleton</keyword>
<keyword id="KW-0597">Phosphoprotein</keyword>
<keyword id="KW-1185">Reference proteome</keyword>
<comment type="function">
    <text evidence="6 7">May be involved in the reorganization of actin cytoskeleton mediated by RND1, RND2 and RND3. Promotes RHOA activation mediated by GNA12 and GNA13.</text>
</comment>
<comment type="subunit">
    <text evidence="6 7">Interacts with GNA12, GNA13, RND1, RND2 and RND3.</text>
</comment>
<comment type="subcellular location">
    <subcellularLocation>
        <location evidence="6">Cytoplasm</location>
        <location evidence="6">Cytoskeleton</location>
    </subcellularLocation>
</comment>
<comment type="tissue specificity">
    <text evidence="6">Strongly expressed in testis. Also expressed in lung, brain and thymus.</text>
</comment>
<sequence length="485" mass="54721">MSSPLASLSKTRKVPLESEPVNPGRRGIRIYGDEDEVDMVNDGQDSEEKISLPSCYGGIGRQGLMIHDSELLTSMARKLQELEQQLKARNEEMLSKEQKILALEDLVQTLQQHQSSTTREEELETQCIQLQRQVGEMERFLNDYGLQWVGEPMDQENSEGKIISESDERDWMKAKKFWKPGDSIVPPEVDFDRLLSSLQDLSELVVEGEAQVTPVPGGAQFRTLEPIPLKLYRNGIMMFDGPFRPFYDPYTQRCLRDILDGFFPSELQRLYPDGVPFKVSDLRNQVYPEDGLGPFPGEGRVVGRQKIRKVTDRVEETSGSRMTAEKFLNRLPKCVIRQGEVIDIRGPIRDTLQNCCPMPVRIQEIIVETPALASERQRTQESPNMPVPPLSMLRIKSENGEQAFLLMMRPEDTIGDVRNLLAQARDMDSAAFEILSTFPPTVYRDDTVTLQAAGLVPNATLLLRTRRVLPANPSFGTDSGPGSLP</sequence>
<organism>
    <name type="scientific">Rattus norvegicus</name>
    <name type="common">Rat</name>
    <dbReference type="NCBI Taxonomy" id="10116"/>
    <lineage>
        <taxon>Eukaryota</taxon>
        <taxon>Metazoa</taxon>
        <taxon>Chordata</taxon>
        <taxon>Craniata</taxon>
        <taxon>Vertebrata</taxon>
        <taxon>Euteleostomi</taxon>
        <taxon>Mammalia</taxon>
        <taxon>Eutheria</taxon>
        <taxon>Euarchontoglires</taxon>
        <taxon>Glires</taxon>
        <taxon>Rodentia</taxon>
        <taxon>Myomorpha</taxon>
        <taxon>Muroidea</taxon>
        <taxon>Muridae</taxon>
        <taxon>Murinae</taxon>
        <taxon>Rattus</taxon>
    </lineage>
</organism>
<feature type="chain" id="PRO_0000284923" description="UBX domain-containing protein 11">
    <location>
        <begin position="1"/>
        <end position="485"/>
    </location>
</feature>
<feature type="domain" description="SEP" evidence="4">
    <location>
        <begin position="224"/>
        <end position="288"/>
    </location>
</feature>
<feature type="domain" description="UBX" evidence="3">
    <location>
        <begin position="386"/>
        <end position="463"/>
    </location>
</feature>
<feature type="region of interest" description="Disordered" evidence="5">
    <location>
        <begin position="1"/>
        <end position="26"/>
    </location>
</feature>
<feature type="coiled-coil region" evidence="2">
    <location>
        <begin position="67"/>
        <end position="143"/>
    </location>
</feature>
<feature type="modified residue" description="Phosphoserine" evidence="1">
    <location>
        <position position="479"/>
    </location>
</feature>
<feature type="modified residue" description="Phosphoserine" evidence="1">
    <location>
        <position position="483"/>
    </location>
</feature>
<name>UBX11_RAT</name>
<gene>
    <name type="primary">Ubxn11</name>
    <name type="synonym">Soc</name>
    <name type="synonym">Ubxd5</name>
</gene>
<proteinExistence type="evidence at protein level"/>